<protein>
    <recommendedName>
        <fullName evidence="1">Regulator of telomere elongation helicase 1</fullName>
        <ecNumber evidence="1">5.6.2.-</ecNumber>
    </recommendedName>
</protein>
<name>RTEL1_RAT</name>
<keyword id="KW-0004">4Fe-4S</keyword>
<keyword id="KW-0025">Alternative splicing</keyword>
<keyword id="KW-0067">ATP-binding</keyword>
<keyword id="KW-0227">DNA damage</keyword>
<keyword id="KW-0234">DNA repair</keyword>
<keyword id="KW-0238">DNA-binding</keyword>
<keyword id="KW-0347">Helicase</keyword>
<keyword id="KW-0378">Hydrolase</keyword>
<keyword id="KW-0408">Iron</keyword>
<keyword id="KW-0411">Iron-sulfur</keyword>
<keyword id="KW-0413">Isomerase</keyword>
<keyword id="KW-0479">Metal-binding</keyword>
<keyword id="KW-0547">Nucleotide-binding</keyword>
<keyword id="KW-0539">Nucleus</keyword>
<keyword id="KW-1185">Reference proteome</keyword>
<evidence type="ECO:0000255" key="1">
    <source>
        <dbReference type="HAMAP-Rule" id="MF_03065"/>
    </source>
</evidence>
<evidence type="ECO:0000256" key="2">
    <source>
        <dbReference type="SAM" id="MobiDB-lite"/>
    </source>
</evidence>
<evidence type="ECO:0000303" key="3">
    <source>
    </source>
</evidence>
<evidence type="ECO:0000305" key="4"/>
<gene>
    <name type="primary">Rtel1</name>
</gene>
<sequence length="1274" mass="141779">MPRVVLNGVTVDFPFQPYPCQQEYMTKVLECLQKKVNGILESPTGTGKTLCLLCTTLAWREHLRDAVSSLKIAERVQGELFASRTLSSWRSAADANGDSIDCYTDIPKIIYASRTHSQLTQVIGELRNTSYRPKVCVLGSREQLCIHPEVKKQESNHMQISLCRKKVASRSCHFYNNVEEKSLEQELATPILDIEDLVKNGSKHKVCPYYLSRNLKQQADIIFMPYNYLLDAKSRKAHNIDLKGTVVIFDEAHNVEKICEESASFDLTPRDVASGLEVINQVLEEQARVAQHGELQQEFIIDTSSSGLNMELEDIAKLKMILLHLEEAIDAVQLPGDDRGVTKPGSYIFELFAEAQITFQTKGCILESLDQIIQHLTGRTGVFTNTAGLQKLMDIIQIVFSVDPLEGSPGSQVGLGSSHFYKVHIHPETSHRRAAQRSDAWSTTASRKQGKVLSYWCFSPSHSMRELVQQGVRTLILTSGTLAPLSSFALEMQIPFPVCLENPHIIDKNQLWVGVIPRGPDGVQLSSAYDKRFSEECLSSLGKALGNIARVVPHGLLVFFPSYPVMEKSLEFWQAQGMSKKVEALKPLFVEPRNKGSFSEVIDAYYQQVASPGSNGATFLAVCRGKASEGLDFSDMNGRGVIVTGLPYPPRMDPRVILKMQFLDEMKGRSRVGGQCLSGQEWYQQQASRAVNQAIGRVIRHRHDYGAIFLCDHRFAYADARAHLPSWVRPYLKVYDNFGRVIRDVAQFFRVAQKAMPLPVPQAVTSSVSEGEAAVKEATLSSHSLSTRKAMSLDVHVPSLRRRPVGLPTAGDSESSVCVEYEQQTFSAQKRPMGLLAALEYNEQKAGASEEQALSSSTPSLRCEKRLSVEQRGGKKKVRLVNHPEEPVAGTQAGRAKMFMVAVKQALSQANFDTFTQALQHYKSSDDFEALVASLTCLFAEDPKKHTLLKGFYQFVRPHHKQQFEDICFQLTGQRCSYQPGNSLPFGEQAQSTASKQGRRELESKLTLSEGADRQLDPGEHLNQGWPHLSTHLTSKGDTSNCPKVGCVGEKPGQPAVNDYLSDVHKALGSASCNQLTAALRAYKQDDDLDKVLAVVAALTTAKPEHLSLLQRFGMFIRRHHKPRFVQTCADLMGLPTIGKGLELPCPRDESTTVPSELTHEDMKPGPSTSKKPEKTQSKISSFLRQRPDQSARSDDTIMQLPPRLPPEHTTSQWNFVCPACATEDTVLFQCPSCDFCRCRACWQRQLQASRLCPACGAVNRKQSIAQVIWPKPQ</sequence>
<proteinExistence type="evidence at transcript level"/>
<reference key="1">
    <citation type="submission" date="2007-06" db="EMBL/GenBank/DDBJ databases">
        <authorList>
            <person name="Mural R.J."/>
            <person name="Adams M.D."/>
            <person name="Myers E.W."/>
            <person name="Smith H.O."/>
            <person name="Venter J.C."/>
        </authorList>
    </citation>
    <scope>NUCLEOTIDE SEQUENCE [LARGE SCALE GENOMIC DNA]</scope>
</reference>
<reference key="2">
    <citation type="journal article" date="2004" name="Genome Res.">
        <title>The status, quality, and expansion of the NIH full-length cDNA project: the Mammalian Gene Collection (MGC).</title>
        <authorList>
            <consortium name="The MGC Project Team"/>
        </authorList>
    </citation>
    <scope>NUCLEOTIDE SEQUENCE [LARGE SCALE MRNA] OF 868-1274 (ISOFORM 2)</scope>
    <source>
        <tissue>Ovary</tissue>
    </source>
</reference>
<organism>
    <name type="scientific">Rattus norvegicus</name>
    <name type="common">Rat</name>
    <dbReference type="NCBI Taxonomy" id="10116"/>
    <lineage>
        <taxon>Eukaryota</taxon>
        <taxon>Metazoa</taxon>
        <taxon>Chordata</taxon>
        <taxon>Craniata</taxon>
        <taxon>Vertebrata</taxon>
        <taxon>Euteleostomi</taxon>
        <taxon>Mammalia</taxon>
        <taxon>Eutheria</taxon>
        <taxon>Euarchontoglires</taxon>
        <taxon>Glires</taxon>
        <taxon>Rodentia</taxon>
        <taxon>Myomorpha</taxon>
        <taxon>Muroidea</taxon>
        <taxon>Muridae</taxon>
        <taxon>Murinae</taxon>
        <taxon>Rattus</taxon>
    </lineage>
</organism>
<dbReference type="EC" id="5.6.2.-" evidence="1"/>
<dbReference type="EMBL" id="CH474066">
    <property type="protein sequence ID" value="EDL88727.1"/>
    <property type="status" value="ALT_SEQ"/>
    <property type="molecule type" value="Genomic_DNA"/>
</dbReference>
<dbReference type="EMBL" id="BC086436">
    <property type="protein sequence ID" value="AAH86436.1"/>
    <property type="molecule type" value="mRNA"/>
</dbReference>
<dbReference type="RefSeq" id="NP_001178786.1">
    <molecule id="Q5RJZ1-1"/>
    <property type="nucleotide sequence ID" value="NM_001191857.2"/>
</dbReference>
<dbReference type="SMR" id="Q5RJZ1"/>
<dbReference type="FunCoup" id="Q5RJZ1">
    <property type="interactions" value="2545"/>
</dbReference>
<dbReference type="STRING" id="10116.ENSRNOP00000051909"/>
<dbReference type="iPTMnet" id="Q5RJZ1"/>
<dbReference type="PhosphoSitePlus" id="Q5RJZ1"/>
<dbReference type="PaxDb" id="10116-ENSRNOP00000051909"/>
<dbReference type="Ensembl" id="ENSRNOT00000055030.4">
    <molecule id="Q5RJZ1-1"/>
    <property type="protein sequence ID" value="ENSRNOP00000051909.3"/>
    <property type="gene ID" value="ENSRNOG00000027513.7"/>
</dbReference>
<dbReference type="GeneID" id="362288"/>
<dbReference type="KEGG" id="rno:362288"/>
<dbReference type="UCSC" id="RGD:1306721">
    <molecule id="Q5RJZ1-1"/>
    <property type="organism name" value="rat"/>
</dbReference>
<dbReference type="AGR" id="RGD:1306721"/>
<dbReference type="CTD" id="51750"/>
<dbReference type="RGD" id="1306721">
    <property type="gene designation" value="Rtel1"/>
</dbReference>
<dbReference type="eggNOG" id="KOG1132">
    <property type="taxonomic scope" value="Eukaryota"/>
</dbReference>
<dbReference type="GeneTree" id="ENSGT00950000182970"/>
<dbReference type="InParanoid" id="Q5RJZ1"/>
<dbReference type="OMA" id="EDPNTHS"/>
<dbReference type="OrthoDB" id="19182at2759"/>
<dbReference type="PhylomeDB" id="Q5RJZ1"/>
<dbReference type="Reactome" id="R-RNO-171319">
    <property type="pathway name" value="Telomere Extension By Telomerase"/>
</dbReference>
<dbReference type="PRO" id="PR:Q5RJZ1"/>
<dbReference type="Proteomes" id="UP000002494">
    <property type="component" value="Chromosome 3"/>
</dbReference>
<dbReference type="Proteomes" id="UP000234681">
    <property type="component" value="Chromosome 3"/>
</dbReference>
<dbReference type="Bgee" id="ENSRNOG00000027513">
    <property type="expression patterns" value="Expressed in thymus and 19 other cell types or tissues"/>
</dbReference>
<dbReference type="ExpressionAtlas" id="Q5RJZ1">
    <property type="expression patterns" value="baseline and differential"/>
</dbReference>
<dbReference type="GO" id="GO:0000781">
    <property type="term" value="C:chromosome, telomeric region"/>
    <property type="evidence" value="ECO:0000266"/>
    <property type="project" value="RGD"/>
</dbReference>
<dbReference type="GO" id="GO:0031965">
    <property type="term" value="C:nuclear membrane"/>
    <property type="evidence" value="ECO:0007669"/>
    <property type="project" value="Ensembl"/>
</dbReference>
<dbReference type="GO" id="GO:0016607">
    <property type="term" value="C:nuclear speck"/>
    <property type="evidence" value="ECO:0007669"/>
    <property type="project" value="Ensembl"/>
</dbReference>
<dbReference type="GO" id="GO:0005634">
    <property type="term" value="C:nucleus"/>
    <property type="evidence" value="ECO:0000250"/>
    <property type="project" value="UniProtKB"/>
</dbReference>
<dbReference type="GO" id="GO:0051539">
    <property type="term" value="F:4 iron, 4 sulfur cluster binding"/>
    <property type="evidence" value="ECO:0007669"/>
    <property type="project" value="UniProtKB-UniRule"/>
</dbReference>
<dbReference type="GO" id="GO:0005524">
    <property type="term" value="F:ATP binding"/>
    <property type="evidence" value="ECO:0000250"/>
    <property type="project" value="UniProtKB"/>
</dbReference>
<dbReference type="GO" id="GO:0016887">
    <property type="term" value="F:ATP hydrolysis activity"/>
    <property type="evidence" value="ECO:0007669"/>
    <property type="project" value="RHEA"/>
</dbReference>
<dbReference type="GO" id="GO:0003677">
    <property type="term" value="F:DNA binding"/>
    <property type="evidence" value="ECO:0007669"/>
    <property type="project" value="UniProtKB-UniRule"/>
</dbReference>
<dbReference type="GO" id="GO:0003678">
    <property type="term" value="F:DNA helicase activity"/>
    <property type="evidence" value="ECO:0000250"/>
    <property type="project" value="UniProtKB"/>
</dbReference>
<dbReference type="GO" id="GO:0070182">
    <property type="term" value="F:DNA polymerase binding"/>
    <property type="evidence" value="ECO:0000266"/>
    <property type="project" value="RGD"/>
</dbReference>
<dbReference type="GO" id="GO:0046872">
    <property type="term" value="F:metal ion binding"/>
    <property type="evidence" value="ECO:0007669"/>
    <property type="project" value="UniProtKB-UniRule"/>
</dbReference>
<dbReference type="GO" id="GO:0006281">
    <property type="term" value="P:DNA repair"/>
    <property type="evidence" value="ECO:0007669"/>
    <property type="project" value="UniProtKB-UniRule"/>
</dbReference>
<dbReference type="GO" id="GO:0000732">
    <property type="term" value="P:DNA strand displacement"/>
    <property type="evidence" value="ECO:0000266"/>
    <property type="project" value="RGD"/>
</dbReference>
<dbReference type="GO" id="GO:1902990">
    <property type="term" value="P:mitotic telomere maintenance via semi-conservative replication"/>
    <property type="evidence" value="ECO:0000266"/>
    <property type="project" value="RGD"/>
</dbReference>
<dbReference type="GO" id="GO:0045910">
    <property type="term" value="P:negative regulation of DNA recombination"/>
    <property type="evidence" value="ECO:0000266"/>
    <property type="project" value="RGD"/>
</dbReference>
<dbReference type="GO" id="GO:1904430">
    <property type="term" value="P:negative regulation of t-circle formation"/>
    <property type="evidence" value="ECO:0000266"/>
    <property type="project" value="RGD"/>
</dbReference>
<dbReference type="GO" id="GO:1904506">
    <property type="term" value="P:negative regulation of telomere maintenance in response to DNA damage"/>
    <property type="evidence" value="ECO:0000266"/>
    <property type="project" value="RGD"/>
</dbReference>
<dbReference type="GO" id="GO:1904355">
    <property type="term" value="P:positive regulation of telomere capping"/>
    <property type="evidence" value="ECO:0000266"/>
    <property type="project" value="RGD"/>
</dbReference>
<dbReference type="GO" id="GO:0032206">
    <property type="term" value="P:positive regulation of telomere maintenance"/>
    <property type="evidence" value="ECO:0000266"/>
    <property type="project" value="RGD"/>
</dbReference>
<dbReference type="GO" id="GO:1904358">
    <property type="term" value="P:positive regulation of telomere maintenance via telomere lengthening"/>
    <property type="evidence" value="ECO:0000266"/>
    <property type="project" value="RGD"/>
</dbReference>
<dbReference type="GO" id="GO:1904535">
    <property type="term" value="P:positive regulation of telomeric loop disassembly"/>
    <property type="evidence" value="ECO:0000266"/>
    <property type="project" value="RGD"/>
</dbReference>
<dbReference type="GO" id="GO:0010569">
    <property type="term" value="P:regulation of double-strand break repair via homologous recombination"/>
    <property type="evidence" value="ECO:0000250"/>
    <property type="project" value="UniProtKB"/>
</dbReference>
<dbReference type="GO" id="GO:0031297">
    <property type="term" value="P:replication fork processing"/>
    <property type="evidence" value="ECO:0000266"/>
    <property type="project" value="RGD"/>
</dbReference>
<dbReference type="GO" id="GO:0000723">
    <property type="term" value="P:telomere maintenance"/>
    <property type="evidence" value="ECO:0000250"/>
    <property type="project" value="UniProtKB"/>
</dbReference>
<dbReference type="GO" id="GO:0043247">
    <property type="term" value="P:telomere maintenance in response to DNA damage"/>
    <property type="evidence" value="ECO:0000266"/>
    <property type="project" value="RGD"/>
</dbReference>
<dbReference type="GO" id="GO:0090657">
    <property type="term" value="P:telomeric loop disassembly"/>
    <property type="evidence" value="ECO:0000266"/>
    <property type="project" value="RGD"/>
</dbReference>
<dbReference type="CDD" id="cd17970">
    <property type="entry name" value="DEAHc_FancJ"/>
    <property type="match status" value="1"/>
</dbReference>
<dbReference type="CDD" id="cd13932">
    <property type="entry name" value="HN_RTEL1"/>
    <property type="match status" value="2"/>
</dbReference>
<dbReference type="CDD" id="cd18788">
    <property type="entry name" value="SF2_C_XPD"/>
    <property type="match status" value="1"/>
</dbReference>
<dbReference type="FunFam" id="1.20.1160.20:FF:000006">
    <property type="entry name" value="Regulator of telomere elongation helicase 1"/>
    <property type="match status" value="1"/>
</dbReference>
<dbReference type="FunFam" id="1.20.1160.20:FF:000009">
    <property type="entry name" value="Regulator of telomere elongation helicase 1"/>
    <property type="match status" value="1"/>
</dbReference>
<dbReference type="FunFam" id="3.40.50.300:FF:000431">
    <property type="entry name" value="Regulator of telomere elongation helicase 1"/>
    <property type="match status" value="1"/>
</dbReference>
<dbReference type="FunFam" id="3.40.50.300:FF:000691">
    <property type="entry name" value="Regulator of telomere elongation helicase 1"/>
    <property type="match status" value="1"/>
</dbReference>
<dbReference type="Gene3D" id="1.20.1160.20">
    <property type="match status" value="2"/>
</dbReference>
<dbReference type="Gene3D" id="3.40.50.300">
    <property type="entry name" value="P-loop containing nucleotide triphosphate hydrolases"/>
    <property type="match status" value="2"/>
</dbReference>
<dbReference type="HAMAP" id="MF_03065">
    <property type="entry name" value="RTEL1"/>
    <property type="match status" value="1"/>
</dbReference>
<dbReference type="InterPro" id="IPR006555">
    <property type="entry name" value="ATP-dep_Helicase_C"/>
</dbReference>
<dbReference type="InterPro" id="IPR045028">
    <property type="entry name" value="DinG/Rad3-like"/>
</dbReference>
<dbReference type="InterPro" id="IPR014013">
    <property type="entry name" value="Helic_SF1/SF2_ATP-bd_DinG/Rad3"/>
</dbReference>
<dbReference type="InterPro" id="IPR006554">
    <property type="entry name" value="Helicase-like_DEXD_c2"/>
</dbReference>
<dbReference type="InterPro" id="IPR049909">
    <property type="entry name" value="HHD_RTEL1"/>
</dbReference>
<dbReference type="InterPro" id="IPR027417">
    <property type="entry name" value="P-loop_NTPase"/>
</dbReference>
<dbReference type="InterPro" id="IPR010614">
    <property type="entry name" value="RAD3-like_helicase_DEAD"/>
</dbReference>
<dbReference type="InterPro" id="IPR013020">
    <property type="entry name" value="Rad3/Chl1-like"/>
</dbReference>
<dbReference type="InterPro" id="IPR030845">
    <property type="entry name" value="RTEL1"/>
</dbReference>
<dbReference type="NCBIfam" id="TIGR00604">
    <property type="entry name" value="rad3"/>
    <property type="match status" value="1"/>
</dbReference>
<dbReference type="PANTHER" id="PTHR11472">
    <property type="entry name" value="DNA REPAIR DEAD HELICASE RAD3/XP-D SUBFAMILY MEMBER"/>
    <property type="match status" value="1"/>
</dbReference>
<dbReference type="PANTHER" id="PTHR11472:SF34">
    <property type="entry name" value="REGULATOR OF TELOMERE ELONGATION HELICASE 1"/>
    <property type="match status" value="1"/>
</dbReference>
<dbReference type="Pfam" id="PF23109">
    <property type="entry name" value="ARCH_RTEL1"/>
    <property type="match status" value="1"/>
</dbReference>
<dbReference type="Pfam" id="PF06733">
    <property type="entry name" value="DEAD_2"/>
    <property type="match status" value="1"/>
</dbReference>
<dbReference type="Pfam" id="PF13307">
    <property type="entry name" value="Helicase_C_2"/>
    <property type="match status" value="1"/>
</dbReference>
<dbReference type="Pfam" id="PF23116">
    <property type="entry name" value="HHD_RTEL1"/>
    <property type="match status" value="2"/>
</dbReference>
<dbReference type="SMART" id="SM00488">
    <property type="entry name" value="DEXDc2"/>
    <property type="match status" value="1"/>
</dbReference>
<dbReference type="SMART" id="SM00491">
    <property type="entry name" value="HELICc2"/>
    <property type="match status" value="1"/>
</dbReference>
<dbReference type="SUPFAM" id="SSF52540">
    <property type="entry name" value="P-loop containing nucleoside triphosphate hydrolases"/>
    <property type="match status" value="2"/>
</dbReference>
<dbReference type="PROSITE" id="PS51193">
    <property type="entry name" value="HELICASE_ATP_BIND_2"/>
    <property type="match status" value="1"/>
</dbReference>
<comment type="function">
    <text evidence="1">A probable ATP-dependent DNA helicase implicated in telomere-length regulation, DNA repair and the maintenance of genomic stability. Acts as an anti-recombinase to counteract toxic recombination and limit crossover during meiosis. Regulates meiotic recombination and crossover homeostasis by physically dissociating strand invasion events and thereby promotes noncrossover repair by meiotic synthesis dependent strand annealing (SDSA) as well as disassembly of D loop recombination intermediates. Also disassembles T loops and prevents telomere fragility by counteracting telomeric G4-DNA structures, which together ensure the dynamics and stability of the telomere.</text>
</comment>
<comment type="catalytic activity">
    <reaction evidence="1">
        <text>ATP + H2O = ADP + phosphate + H(+)</text>
        <dbReference type="Rhea" id="RHEA:13065"/>
        <dbReference type="ChEBI" id="CHEBI:15377"/>
        <dbReference type="ChEBI" id="CHEBI:15378"/>
        <dbReference type="ChEBI" id="CHEBI:30616"/>
        <dbReference type="ChEBI" id="CHEBI:43474"/>
        <dbReference type="ChEBI" id="CHEBI:456216"/>
    </reaction>
</comment>
<comment type="subunit">
    <text evidence="1">Interacts with TERF1. Interacts (via PIP-box) with PCNA; the interaction is direct and essential for suppressing telomere fragility. Interacts with MMS19; the interaction mediates the association of RTEL1 with the cytosolic iron-sulfur protein assembly (CIA) complex.</text>
</comment>
<comment type="subcellular location">
    <subcellularLocation>
        <location evidence="1">Nucleus</location>
    </subcellularLocation>
    <text evidence="1">Colocalizes with PCNA within the replication foci in S-phase cells.</text>
</comment>
<comment type="alternative products">
    <event type="alternative splicing"/>
    <isoform>
        <id>Q5RJZ1-1</id>
        <name>1</name>
        <sequence type="displayed"/>
    </isoform>
    <isoform>
        <id>Q5RJZ1-2</id>
        <name>2</name>
        <sequence type="described" ref="VSP_036956 VSP_036957"/>
    </isoform>
</comment>
<comment type="domain">
    <text evidence="1">The PIP-box (PCNA interacting peptide) motif mediates the interaction with PCNA and localization to replication foci.</text>
</comment>
<comment type="similarity">
    <text evidence="1">Belongs to the helicase family. RAD3/XPD subfamily.</text>
</comment>
<comment type="sequence caution" evidence="4">
    <conflict type="erroneous gene model prediction">
        <sequence resource="EMBL-CDS" id="EDL88727"/>
    </conflict>
</comment>
<feature type="chain" id="PRO_0000370613" description="Regulator of telomere elongation helicase 1">
    <location>
        <begin position="1"/>
        <end position="1274"/>
    </location>
</feature>
<feature type="domain" description="Helicase ATP-binding" evidence="1">
    <location>
        <begin position="7"/>
        <end position="296"/>
    </location>
</feature>
<feature type="region of interest" description="Disordered" evidence="2">
    <location>
        <begin position="982"/>
        <end position="1002"/>
    </location>
</feature>
<feature type="region of interest" description="Disordered" evidence="2">
    <location>
        <begin position="1014"/>
        <end position="1038"/>
    </location>
</feature>
<feature type="region of interest" description="Disordered" evidence="2">
    <location>
        <begin position="1143"/>
        <end position="1198"/>
    </location>
</feature>
<feature type="short sequence motif" description="Nuclear localization signal" evidence="1">
    <location>
        <begin position="151"/>
        <end position="167"/>
    </location>
</feature>
<feature type="short sequence motif" description="DEAH box">
    <location>
        <begin position="250"/>
        <end position="253"/>
    </location>
</feature>
<feature type="short sequence motif" description="Nuclear localization signal" evidence="1">
    <location>
        <begin position="871"/>
        <end position="877"/>
    </location>
</feature>
<feature type="compositionally biased region" description="Basic and acidic residues" evidence="2">
    <location>
        <begin position="1186"/>
        <end position="1196"/>
    </location>
</feature>
<feature type="binding site" evidence="1">
    <location>
        <begin position="42"/>
        <end position="49"/>
    </location>
    <ligand>
        <name>ATP</name>
        <dbReference type="ChEBI" id="CHEBI:30616"/>
    </ligand>
</feature>
<feature type="binding site" evidence="1">
    <location>
        <position position="145"/>
    </location>
    <ligand>
        <name>[4Fe-4S] cluster</name>
        <dbReference type="ChEBI" id="CHEBI:49883"/>
    </ligand>
</feature>
<feature type="binding site" evidence="1">
    <location>
        <position position="163"/>
    </location>
    <ligand>
        <name>[4Fe-4S] cluster</name>
        <dbReference type="ChEBI" id="CHEBI:49883"/>
    </ligand>
</feature>
<feature type="binding site" evidence="1">
    <location>
        <position position="172"/>
    </location>
    <ligand>
        <name>[4Fe-4S] cluster</name>
        <dbReference type="ChEBI" id="CHEBI:49883"/>
    </ligand>
</feature>
<feature type="binding site" evidence="1">
    <location>
        <position position="207"/>
    </location>
    <ligand>
        <name>[4Fe-4S] cluster</name>
        <dbReference type="ChEBI" id="CHEBI:49883"/>
    </ligand>
</feature>
<feature type="splice variant" id="VSP_036956" description="In isoform 2." evidence="3">
    <original>SKQG</original>
    <variation>R</variation>
    <location>
        <begin position="995"/>
        <end position="998"/>
    </location>
</feature>
<feature type="splice variant" id="VSP_036957" description="In isoform 2." evidence="3">
    <original>RFGMFIRRHHKPRFVQTCADLMGLPTIG</original>
    <variation>S</variation>
    <location>
        <begin position="1112"/>
        <end position="1139"/>
    </location>
</feature>
<accession>Q5RJZ1</accession>